<feature type="propeptide" id="PRO_0000305979" evidence="1">
    <location>
        <begin position="1"/>
        <end position="5"/>
    </location>
</feature>
<feature type="chain" id="PRO_0000305980" description="Sodium/potassium-transporting ATPase subunit alpha-1" evidence="1">
    <location>
        <begin position="6"/>
        <end position="1023"/>
    </location>
</feature>
<feature type="topological domain" description="Cytoplasmic" evidence="5">
    <location>
        <begin position="6"/>
        <end position="87"/>
    </location>
</feature>
<feature type="transmembrane region" description="Helical" evidence="5">
    <location>
        <begin position="88"/>
        <end position="108"/>
    </location>
</feature>
<feature type="topological domain" description="Extracellular" evidence="5">
    <location>
        <begin position="109"/>
        <end position="131"/>
    </location>
</feature>
<feature type="transmembrane region" description="Helical" evidence="5">
    <location>
        <begin position="132"/>
        <end position="152"/>
    </location>
</feature>
<feature type="topological domain" description="Cytoplasmic" evidence="5">
    <location>
        <begin position="153"/>
        <end position="288"/>
    </location>
</feature>
<feature type="transmembrane region" description="Helical" evidence="5">
    <location>
        <begin position="289"/>
        <end position="308"/>
    </location>
</feature>
<feature type="topological domain" description="Extracellular" evidence="5">
    <location>
        <begin position="309"/>
        <end position="320"/>
    </location>
</feature>
<feature type="transmembrane region" description="Helical" evidence="5">
    <location>
        <begin position="321"/>
        <end position="338"/>
    </location>
</feature>
<feature type="topological domain" description="Cytoplasmic" evidence="5">
    <location>
        <begin position="339"/>
        <end position="772"/>
    </location>
</feature>
<feature type="transmembrane region" description="Helical" evidence="5">
    <location>
        <begin position="773"/>
        <end position="792"/>
    </location>
</feature>
<feature type="topological domain" description="Extracellular" evidence="5">
    <location>
        <begin position="793"/>
        <end position="802"/>
    </location>
</feature>
<feature type="transmembrane region" description="Helical" evidence="5">
    <location>
        <begin position="803"/>
        <end position="823"/>
    </location>
</feature>
<feature type="topological domain" description="Cytoplasmic" evidence="5">
    <location>
        <begin position="824"/>
        <end position="843"/>
    </location>
</feature>
<feature type="transmembrane region" description="Helical" evidence="5">
    <location>
        <begin position="844"/>
        <end position="866"/>
    </location>
</feature>
<feature type="topological domain" description="Extracellular" evidence="5">
    <location>
        <begin position="867"/>
        <end position="918"/>
    </location>
</feature>
<feature type="transmembrane region" description="Helical" evidence="5">
    <location>
        <begin position="919"/>
        <end position="938"/>
    </location>
</feature>
<feature type="topological domain" description="Cytoplasmic" evidence="5">
    <location>
        <begin position="939"/>
        <end position="951"/>
    </location>
</feature>
<feature type="transmembrane region" description="Helical" evidence="5">
    <location>
        <begin position="952"/>
        <end position="970"/>
    </location>
</feature>
<feature type="topological domain" description="Extracellular" evidence="5">
    <location>
        <begin position="971"/>
        <end position="985"/>
    </location>
</feature>
<feature type="transmembrane region" description="Helical" evidence="5">
    <location>
        <begin position="986"/>
        <end position="1006"/>
    </location>
</feature>
<feature type="topological domain" description="Cytoplasmic" evidence="5">
    <location>
        <begin position="1007"/>
        <end position="1023"/>
    </location>
</feature>
<feature type="region of interest" description="Disordered" evidence="6">
    <location>
        <begin position="1"/>
        <end position="38"/>
    </location>
</feature>
<feature type="region of interest" description="Phosphoinositide-3 kinase binding" evidence="1">
    <location>
        <begin position="82"/>
        <end position="84"/>
    </location>
</feature>
<feature type="region of interest" description="Disordered" evidence="6">
    <location>
        <begin position="216"/>
        <end position="235"/>
    </location>
</feature>
<feature type="region of interest" description="Mediates interaction with SCN7A" evidence="4">
    <location>
        <begin position="596"/>
        <end position="717"/>
    </location>
</feature>
<feature type="compositionally biased region" description="Basic and acidic residues" evidence="6">
    <location>
        <begin position="1"/>
        <end position="11"/>
    </location>
</feature>
<feature type="compositionally biased region" description="Basic and acidic residues" evidence="6">
    <location>
        <begin position="28"/>
        <end position="38"/>
    </location>
</feature>
<feature type="active site" description="4-aspartylphosphate intermediate" evidence="1">
    <location>
        <position position="376"/>
    </location>
</feature>
<feature type="binding site" evidence="1">
    <location>
        <position position="487"/>
    </location>
    <ligand>
        <name>ATP</name>
        <dbReference type="ChEBI" id="CHEBI:30616"/>
    </ligand>
</feature>
<feature type="binding site" evidence="1">
    <location>
        <position position="717"/>
    </location>
    <ligand>
        <name>Mg(2+)</name>
        <dbReference type="ChEBI" id="CHEBI:18420"/>
    </ligand>
</feature>
<feature type="binding site" evidence="1">
    <location>
        <position position="721"/>
    </location>
    <ligand>
        <name>Mg(2+)</name>
        <dbReference type="ChEBI" id="CHEBI:18420"/>
    </ligand>
</feature>
<feature type="modified residue" description="N6-acetyllysine" evidence="4">
    <location>
        <position position="9"/>
    </location>
</feature>
<feature type="modified residue" description="Phosphotyrosine" evidence="3">
    <location>
        <position position="10"/>
    </location>
</feature>
<feature type="modified residue" description="Phosphoserine; by PKC" evidence="3">
    <location>
        <position position="16"/>
    </location>
</feature>
<feature type="modified residue" description="N6-acetyllysine" evidence="4">
    <location>
        <position position="21"/>
    </location>
</feature>
<feature type="modified residue" description="Phosphoserine" evidence="3">
    <location>
        <position position="40"/>
    </location>
</feature>
<feature type="modified residue" description="Phosphoserine" evidence="3">
    <location>
        <position position="47"/>
    </location>
</feature>
<feature type="modified residue" description="Phosphoserine" evidence="4">
    <location>
        <position position="228"/>
    </location>
</feature>
<feature type="modified residue" description="Phosphotyrosine" evidence="4">
    <location>
        <position position="260"/>
    </location>
</feature>
<feature type="modified residue" description="Phosphoserine" evidence="3">
    <location>
        <position position="452"/>
    </location>
</feature>
<feature type="modified residue" description="Phosphoserine" evidence="3">
    <location>
        <position position="484"/>
    </location>
</feature>
<feature type="modified residue" description="Phosphotyrosine" evidence="2">
    <location>
        <position position="542"/>
    </location>
</feature>
<feature type="modified residue" description="N6-succinyllysine" evidence="4">
    <location>
        <position position="661"/>
    </location>
</feature>
<feature type="modified residue" description="Phosphoserine" evidence="4">
    <location>
        <position position="668"/>
    </location>
</feature>
<feature type="modified residue" description="Phosphoserine" evidence="4">
    <location>
        <position position="675"/>
    </location>
</feature>
<feature type="modified residue" description="Phosphoserine; by PKA" evidence="3">
    <location>
        <position position="943"/>
    </location>
</feature>
<evidence type="ECO:0000250" key="1"/>
<evidence type="ECO:0000250" key="2">
    <source>
        <dbReference type="UniProtKB" id="P05023"/>
    </source>
</evidence>
<evidence type="ECO:0000250" key="3">
    <source>
        <dbReference type="UniProtKB" id="P06685"/>
    </source>
</evidence>
<evidence type="ECO:0000250" key="4">
    <source>
        <dbReference type="UniProtKB" id="Q8VDN2"/>
    </source>
</evidence>
<evidence type="ECO:0000255" key="5"/>
<evidence type="ECO:0000256" key="6">
    <source>
        <dbReference type="SAM" id="MobiDB-lite"/>
    </source>
</evidence>
<evidence type="ECO:0000269" key="7">
    <source>
    </source>
</evidence>
<evidence type="ECO:0000305" key="8"/>
<accession>Q9N0Z6</accession>
<name>AT1A1_RABIT</name>
<sequence>MGKGVGRDKYEPAAVSEHGDKKGKKAKKERDMDELKKEVSMDDHKLSLDELHRKYGTDLSRGLTTARAAEILARDGPNALTPPPTTPEWVKFCRQLFGGFSMLLWIGAILCFLAYGILAATEEDFDNDNLYLGVVLAAVVIITGCFSYYQEAKSSKIMESFKNMVPQQALVIRNGEKMSINAEDVVVGDLVEVKGGDRIPADLRIISANGCKVDNSSLTGESEPQTRSPDFTNENPLETRNIAFFSTNCVEGTARGIVIYTGDRTVMGRIATLASGLEGGQTPIAAEIEHFIHIITGVAVFLGVSFFILSLILEYTWLEAVIFLIGIIVANVPEGLLATVTVCLTLTAKRMARKNCLVKNLEAVETLGSTSTICSDKTGTLTQNRMTVAHMWFDNQIHEADTTENQSGVSFDKTSATWLALSRIAGLCNRAVFQANQENLPILKRAVAGDASESALLKCIELCCGSVKEMRERYTKIVEIPFNSTNKYQLSIHKNLNANEPRHLLVMKGAPERILDRCSSILLHGKEQPLDEELKDAFQNAYLELGGLGERVLGFCHLLLPDEQFPEGFQFDTDEVNFPVDNLCFIGLISMIDPPRAAVPDAVGKCRSAGIKVIMVTGDHPITAKAIAKGVGIISEGNETVEDIAARLNIPVSQVNPRDAKACVVHGSDLKDMTSEQLDDILKYHTEIVFARTSPQQKLIIVEGCQRQGAIVAVTGDGVNDSPALKKADIGVAMGIAGSDVSKQAADMILLDDNFASIVTGVEEGRLIFDNLKKSIAYTLTSNIPEITPFLIFIIANIPLPLGTVTILCIDLGTDMVPAISLAYEQAESDIMKRQPRNPKTDKLVNERLISMAYGQIGMIQALGGFFTYFVILAENGFLPFHLLGIRVDWDDRWINDVEDSYGQQWTYEQRKIVEFTCHTAFFVSIVVVQWADLVICKTRRNSVFQQGMKNKILIFGLFEETALAAFLSYCPGMGVALRMYPLKPTWWFCAFPYSLLIFVYDEIRKLIIRRRPGGWVEKETYY</sequence>
<dbReference type="EC" id="7.2.2.13"/>
<dbReference type="EMBL" id="AF235024">
    <property type="protein sequence ID" value="AAF60310.2"/>
    <property type="molecule type" value="mRNA"/>
</dbReference>
<dbReference type="RefSeq" id="NP_001156546.1">
    <property type="nucleotide sequence ID" value="NM_001163074.1"/>
</dbReference>
<dbReference type="SMR" id="Q9N0Z6"/>
<dbReference type="FunCoup" id="Q9N0Z6">
    <property type="interactions" value="803"/>
</dbReference>
<dbReference type="IntAct" id="Q9N0Z6">
    <property type="interactions" value="2"/>
</dbReference>
<dbReference type="STRING" id="9986.ENSOCUP00000024821"/>
<dbReference type="PaxDb" id="9986-ENSOCUP00000024821"/>
<dbReference type="GeneID" id="100302415"/>
<dbReference type="KEGG" id="ocu:100302415"/>
<dbReference type="CTD" id="476"/>
<dbReference type="eggNOG" id="KOG0203">
    <property type="taxonomic scope" value="Eukaryota"/>
</dbReference>
<dbReference type="InParanoid" id="Q9N0Z6"/>
<dbReference type="OrthoDB" id="3352408at2759"/>
<dbReference type="Proteomes" id="UP000001811">
    <property type="component" value="Unplaced"/>
</dbReference>
<dbReference type="GO" id="GO:0030424">
    <property type="term" value="C:axon"/>
    <property type="evidence" value="ECO:0007669"/>
    <property type="project" value="UniProtKB-SubCell"/>
</dbReference>
<dbReference type="GO" id="GO:0016323">
    <property type="term" value="C:basolateral plasma membrane"/>
    <property type="evidence" value="ECO:0000250"/>
    <property type="project" value="UniProtKB"/>
</dbReference>
<dbReference type="GO" id="GO:0042470">
    <property type="term" value="C:melanosome"/>
    <property type="evidence" value="ECO:0007669"/>
    <property type="project" value="UniProtKB-SubCell"/>
</dbReference>
<dbReference type="GO" id="GO:0016020">
    <property type="term" value="C:membrane"/>
    <property type="evidence" value="ECO:0000250"/>
    <property type="project" value="UniProtKB"/>
</dbReference>
<dbReference type="GO" id="GO:0005886">
    <property type="term" value="C:plasma membrane"/>
    <property type="evidence" value="ECO:0000250"/>
    <property type="project" value="UniProtKB"/>
</dbReference>
<dbReference type="GO" id="GO:0042383">
    <property type="term" value="C:sarcolemma"/>
    <property type="evidence" value="ECO:0007669"/>
    <property type="project" value="UniProtKB-SubCell"/>
</dbReference>
<dbReference type="GO" id="GO:0005890">
    <property type="term" value="C:sodium:potassium-exchanging ATPase complex"/>
    <property type="evidence" value="ECO:0007669"/>
    <property type="project" value="TreeGrafter"/>
</dbReference>
<dbReference type="GO" id="GO:0005524">
    <property type="term" value="F:ATP binding"/>
    <property type="evidence" value="ECO:0007669"/>
    <property type="project" value="UniProtKB-KW"/>
</dbReference>
<dbReference type="GO" id="GO:0016887">
    <property type="term" value="F:ATP hydrolysis activity"/>
    <property type="evidence" value="ECO:0007669"/>
    <property type="project" value="InterPro"/>
</dbReference>
<dbReference type="GO" id="GO:0051117">
    <property type="term" value="F:ATPase binding"/>
    <property type="evidence" value="ECO:0000353"/>
    <property type="project" value="BHF-UCL"/>
</dbReference>
<dbReference type="GO" id="GO:0046872">
    <property type="term" value="F:metal ion binding"/>
    <property type="evidence" value="ECO:0007669"/>
    <property type="project" value="UniProtKB-KW"/>
</dbReference>
<dbReference type="GO" id="GO:0050998">
    <property type="term" value="F:nitric-oxide synthase binding"/>
    <property type="evidence" value="ECO:0000353"/>
    <property type="project" value="BHF-UCL"/>
</dbReference>
<dbReference type="GO" id="GO:0005391">
    <property type="term" value="F:P-type sodium:potassium-exchanging transporter activity"/>
    <property type="evidence" value="ECO:0007669"/>
    <property type="project" value="UniProtKB-EC"/>
</dbReference>
<dbReference type="GO" id="GO:0030007">
    <property type="term" value="P:intracellular potassium ion homeostasis"/>
    <property type="evidence" value="ECO:0007669"/>
    <property type="project" value="TreeGrafter"/>
</dbReference>
<dbReference type="GO" id="GO:0006883">
    <property type="term" value="P:intracellular sodium ion homeostasis"/>
    <property type="evidence" value="ECO:0007669"/>
    <property type="project" value="TreeGrafter"/>
</dbReference>
<dbReference type="GO" id="GO:1990573">
    <property type="term" value="P:potassium ion import across plasma membrane"/>
    <property type="evidence" value="ECO:0007669"/>
    <property type="project" value="TreeGrafter"/>
</dbReference>
<dbReference type="GO" id="GO:1902600">
    <property type="term" value="P:proton transmembrane transport"/>
    <property type="evidence" value="ECO:0007669"/>
    <property type="project" value="TreeGrafter"/>
</dbReference>
<dbReference type="GO" id="GO:0002028">
    <property type="term" value="P:regulation of sodium ion transport"/>
    <property type="evidence" value="ECO:0000250"/>
    <property type="project" value="UniProtKB"/>
</dbReference>
<dbReference type="GO" id="GO:0036376">
    <property type="term" value="P:sodium ion export across plasma membrane"/>
    <property type="evidence" value="ECO:0007669"/>
    <property type="project" value="TreeGrafter"/>
</dbReference>
<dbReference type="CDD" id="cd02608">
    <property type="entry name" value="P-type_ATPase_Na-K_like"/>
    <property type="match status" value="1"/>
</dbReference>
<dbReference type="FunFam" id="2.70.150.10:FF:000106">
    <property type="entry name" value="Sodium/potassium-transporting ATPase subunit alpha"/>
    <property type="match status" value="1"/>
</dbReference>
<dbReference type="FunFam" id="3.40.1110.10:FF:000001">
    <property type="entry name" value="Sodium/potassium-transporting ATPase subunit alpha"/>
    <property type="match status" value="1"/>
</dbReference>
<dbReference type="FunFam" id="3.40.50.1000:FF:000004">
    <property type="entry name" value="Sodium/potassium-transporting ATPase subunit alpha"/>
    <property type="match status" value="1"/>
</dbReference>
<dbReference type="FunFam" id="1.20.1110.10:FF:000095">
    <property type="entry name" value="Sodium/potassium-transporting ATPase subunit alpha-1"/>
    <property type="match status" value="2"/>
</dbReference>
<dbReference type="Gene3D" id="3.40.1110.10">
    <property type="entry name" value="Calcium-transporting ATPase, cytoplasmic domain N"/>
    <property type="match status" value="1"/>
</dbReference>
<dbReference type="Gene3D" id="2.70.150.10">
    <property type="entry name" value="Calcium-transporting ATPase, cytoplasmic transduction domain A"/>
    <property type="match status" value="1"/>
</dbReference>
<dbReference type="Gene3D" id="1.20.1110.10">
    <property type="entry name" value="Calcium-transporting ATPase, transmembrane domain"/>
    <property type="match status" value="1"/>
</dbReference>
<dbReference type="Gene3D" id="3.40.50.1000">
    <property type="entry name" value="HAD superfamily/HAD-like"/>
    <property type="match status" value="1"/>
</dbReference>
<dbReference type="InterPro" id="IPR006068">
    <property type="entry name" value="ATPase_P-typ_cation-transptr_C"/>
</dbReference>
<dbReference type="InterPro" id="IPR004014">
    <property type="entry name" value="ATPase_P-typ_cation-transptr_N"/>
</dbReference>
<dbReference type="InterPro" id="IPR023299">
    <property type="entry name" value="ATPase_P-typ_cyto_dom_N"/>
</dbReference>
<dbReference type="InterPro" id="IPR018303">
    <property type="entry name" value="ATPase_P-typ_P_site"/>
</dbReference>
<dbReference type="InterPro" id="IPR023298">
    <property type="entry name" value="ATPase_P-typ_TM_dom_sf"/>
</dbReference>
<dbReference type="InterPro" id="IPR008250">
    <property type="entry name" value="ATPase_P-typ_transduc_dom_A_sf"/>
</dbReference>
<dbReference type="InterPro" id="IPR050510">
    <property type="entry name" value="Cation_transp_ATPase_P-type"/>
</dbReference>
<dbReference type="InterPro" id="IPR036412">
    <property type="entry name" value="HAD-like_sf"/>
</dbReference>
<dbReference type="InterPro" id="IPR023214">
    <property type="entry name" value="HAD_sf"/>
</dbReference>
<dbReference type="InterPro" id="IPR005775">
    <property type="entry name" value="P-type_ATPase_IIC"/>
</dbReference>
<dbReference type="InterPro" id="IPR001757">
    <property type="entry name" value="P_typ_ATPase"/>
</dbReference>
<dbReference type="InterPro" id="IPR044492">
    <property type="entry name" value="P_typ_ATPase_HD_dom"/>
</dbReference>
<dbReference type="NCBIfam" id="TIGR01106">
    <property type="entry name" value="ATPase-IIC_X-K"/>
    <property type="match status" value="1"/>
</dbReference>
<dbReference type="NCBIfam" id="TIGR01494">
    <property type="entry name" value="ATPase_P-type"/>
    <property type="match status" value="2"/>
</dbReference>
<dbReference type="PANTHER" id="PTHR43294">
    <property type="entry name" value="SODIUM/POTASSIUM-TRANSPORTING ATPASE SUBUNIT ALPHA"/>
    <property type="match status" value="1"/>
</dbReference>
<dbReference type="PANTHER" id="PTHR43294:SF9">
    <property type="entry name" value="SODIUM_POTASSIUM-TRANSPORTING ATPASE SUBUNIT ALPHA-1"/>
    <property type="match status" value="1"/>
</dbReference>
<dbReference type="Pfam" id="PF13246">
    <property type="entry name" value="Cation_ATPase"/>
    <property type="match status" value="1"/>
</dbReference>
<dbReference type="Pfam" id="PF00689">
    <property type="entry name" value="Cation_ATPase_C"/>
    <property type="match status" value="1"/>
</dbReference>
<dbReference type="Pfam" id="PF00690">
    <property type="entry name" value="Cation_ATPase_N"/>
    <property type="match status" value="1"/>
</dbReference>
<dbReference type="Pfam" id="PF00122">
    <property type="entry name" value="E1-E2_ATPase"/>
    <property type="match status" value="1"/>
</dbReference>
<dbReference type="PRINTS" id="PR00119">
    <property type="entry name" value="CATATPASE"/>
</dbReference>
<dbReference type="PRINTS" id="PR00121">
    <property type="entry name" value="NAKATPASE"/>
</dbReference>
<dbReference type="SFLD" id="SFLDG00002">
    <property type="entry name" value="C1.7:_P-type_atpase_like"/>
    <property type="match status" value="1"/>
</dbReference>
<dbReference type="SFLD" id="SFLDF00027">
    <property type="entry name" value="p-type_atpase"/>
    <property type="match status" value="1"/>
</dbReference>
<dbReference type="SMART" id="SM00831">
    <property type="entry name" value="Cation_ATPase_N"/>
    <property type="match status" value="1"/>
</dbReference>
<dbReference type="SUPFAM" id="SSF81653">
    <property type="entry name" value="Calcium ATPase, transduction domain A"/>
    <property type="match status" value="1"/>
</dbReference>
<dbReference type="SUPFAM" id="SSF81665">
    <property type="entry name" value="Calcium ATPase, transmembrane domain M"/>
    <property type="match status" value="1"/>
</dbReference>
<dbReference type="SUPFAM" id="SSF56784">
    <property type="entry name" value="HAD-like"/>
    <property type="match status" value="1"/>
</dbReference>
<dbReference type="SUPFAM" id="SSF81660">
    <property type="entry name" value="Metal cation-transporting ATPase, ATP-binding domain N"/>
    <property type="match status" value="1"/>
</dbReference>
<dbReference type="PROSITE" id="PS00154">
    <property type="entry name" value="ATPASE_E1_E2"/>
    <property type="match status" value="1"/>
</dbReference>
<comment type="function">
    <text evidence="4 7">This is the catalytic component of the active enzyme, which catalyzes the hydrolysis of ATP coupled with the exchange of sodium and potassium ions across the plasma membrane. This action creates the electrochemical gradient of sodium and potassium ions, providing the energy for active transport of various nutrients (PubMed:11738066). Could also be part of an osmosensory signaling pathway that senses body-fluid sodium levels and controls salt intake behavior as well as voluntary water intake to regulate sodium homeostasis (By similarity).</text>
</comment>
<comment type="catalytic activity">
    <reaction>
        <text>K(+)(out) + Na(+)(in) + ATP + H2O = K(+)(in) + Na(+)(out) + ADP + phosphate + H(+)</text>
        <dbReference type="Rhea" id="RHEA:18353"/>
        <dbReference type="ChEBI" id="CHEBI:15377"/>
        <dbReference type="ChEBI" id="CHEBI:15378"/>
        <dbReference type="ChEBI" id="CHEBI:29101"/>
        <dbReference type="ChEBI" id="CHEBI:29103"/>
        <dbReference type="ChEBI" id="CHEBI:30616"/>
        <dbReference type="ChEBI" id="CHEBI:43474"/>
        <dbReference type="ChEBI" id="CHEBI:456216"/>
        <dbReference type="EC" id="7.2.2.13"/>
    </reaction>
</comment>
<comment type="subunit">
    <text evidence="2 3 4">The sodium/potassium-transporting ATPase is composed of a catalytic alpha subunit, an auxiliary non-catalytic beta subunit and an additional regulatory subunit. Interacts with regulatory subunit FXYD1. Interacts with regulatory subunit FXYD3. Interacts with SIK1. Interacts with SLC35G1 and STIM1. Interacts with CLN3; this interaction regulates the sodium/potassium-transporting ATPase complex localization at the plasma membrane (By similarity). Interacts with SCN7A; activates ATP1A1 P-type sodium:potassium-exchanging transporter activity which indirectly signals to nearby neurons to regulate sodium homeostasis (By similarity).</text>
</comment>
<comment type="interaction">
    <interactant intactId="EBI-9685690">
        <id>Q9N0Z6</id>
    </interactant>
    <interactant intactId="EBI-9685670">
        <id>Q9TT37</id>
        <label>ATP1B1</label>
    </interactant>
    <organismsDiffer>false</organismsDiffer>
    <experiments>2</experiments>
</comment>
<comment type="subcellular location">
    <subcellularLocation>
        <location evidence="4">Cell membrane</location>
        <topology evidence="5">Multi-pass membrane protein</topology>
    </subcellularLocation>
    <subcellularLocation>
        <location evidence="3">Basolateral cell membrane</location>
        <topology evidence="5">Multi-pass membrane protein</topology>
    </subcellularLocation>
    <subcellularLocation>
        <location evidence="2">Cell membrane</location>
        <location evidence="2">Sarcolemma</location>
        <topology evidence="5">Multi-pass membrane protein</topology>
    </subcellularLocation>
    <subcellularLocation>
        <location evidence="3">Cell projection</location>
        <location evidence="3">Axon</location>
    </subcellularLocation>
    <subcellularLocation>
        <location evidence="2">Melanosome</location>
    </subcellularLocation>
</comment>
<comment type="tissue specificity">
    <text evidence="7">Expressed in endocardial endothelial cells.</text>
</comment>
<comment type="PTM">
    <text evidence="1">Phosphorylation on Tyr-10 modulates pumping activity. Phosphorylation of Ser-943 by PKA modulates the response of ATP1A1 to PKC. Dephosphorylation by protein phosphatase 2A (PP2A) following increases in intracellular sodium, leading to increase catalytic activity (By similarity).</text>
</comment>
<comment type="similarity">
    <text evidence="8">Belongs to the cation transport ATPase (P-type) (TC 3.A.3) family. Type IIC subfamily.</text>
</comment>
<keyword id="KW-0007">Acetylation</keyword>
<keyword id="KW-0067">ATP-binding</keyword>
<keyword id="KW-1003">Cell membrane</keyword>
<keyword id="KW-0966">Cell projection</keyword>
<keyword id="KW-0406">Ion transport</keyword>
<keyword id="KW-0460">Magnesium</keyword>
<keyword id="KW-0472">Membrane</keyword>
<keyword id="KW-0479">Metal-binding</keyword>
<keyword id="KW-0547">Nucleotide-binding</keyword>
<keyword id="KW-0597">Phosphoprotein</keyword>
<keyword id="KW-0630">Potassium</keyword>
<keyword id="KW-0633">Potassium transport</keyword>
<keyword id="KW-1185">Reference proteome</keyword>
<keyword id="KW-0915">Sodium</keyword>
<keyword id="KW-0739">Sodium transport</keyword>
<keyword id="KW-0740">Sodium/potassium transport</keyword>
<keyword id="KW-1278">Translocase</keyword>
<keyword id="KW-0812">Transmembrane</keyword>
<keyword id="KW-1133">Transmembrane helix</keyword>
<keyword id="KW-0813">Transport</keyword>
<proteinExistence type="evidence at protein level"/>
<gene>
    <name type="primary">ATP1A1</name>
</gene>
<organism>
    <name type="scientific">Oryctolagus cuniculus</name>
    <name type="common">Rabbit</name>
    <dbReference type="NCBI Taxonomy" id="9986"/>
    <lineage>
        <taxon>Eukaryota</taxon>
        <taxon>Metazoa</taxon>
        <taxon>Chordata</taxon>
        <taxon>Craniata</taxon>
        <taxon>Vertebrata</taxon>
        <taxon>Euteleostomi</taxon>
        <taxon>Mammalia</taxon>
        <taxon>Eutheria</taxon>
        <taxon>Euarchontoglires</taxon>
        <taxon>Glires</taxon>
        <taxon>Lagomorpha</taxon>
        <taxon>Leporidae</taxon>
        <taxon>Oryctolagus</taxon>
    </lineage>
</organism>
<reference key="1">
    <citation type="journal article" date="2001" name="Cardiovasc. Res.">
        <title>Distribution and role of Na(+)/K(+) ATPase in endocardial endothelium.</title>
        <authorList>
            <person name="Fransen P."/>
            <person name="Hendrickx J."/>
            <person name="Brutsaert D.L."/>
            <person name="Sys S.U."/>
        </authorList>
    </citation>
    <scope>NUCLEOTIDE SEQUENCE [MRNA]</scope>
    <scope>FUNCTION</scope>
    <scope>TISSUE SPECIFICITY</scope>
</reference>
<protein>
    <recommendedName>
        <fullName>Sodium/potassium-transporting ATPase subunit alpha-1</fullName>
        <shortName>Na(+)/K(+) ATPase alpha-1 subunit</shortName>
        <ecNumber>7.2.2.13</ecNumber>
    </recommendedName>
    <alternativeName>
        <fullName>Sodium pump subunit alpha-1</fullName>
    </alternativeName>
</protein>